<evidence type="ECO:0000255" key="1">
    <source>
        <dbReference type="HAMAP-Rule" id="MF_01164"/>
    </source>
</evidence>
<sequence>MKPYPIQFVSIVIPVYNEEQSLPELLRRTEAACRQLKHEFEIVLVDDGSRDESANILQAAAEREDSPVVAVILNRNYGQHAAIMAGFEQCRGDVVITLDADLQNPPEEIPRLVAQAELGYDVVGTVRNNRQDSAFRRWPSKLINLAVQRSTGVAMSDYGCMLRAYRRTIIDAMLACTERSTFIPILANSFARHTTEVLVEHAEREHGDSKYSPMRLINLMFDLITCMTTTPLRLLSIIGFGMAGLGALFALMLIVLRLIFGATWAGDGTFVLFAVLFVFTGGQFIGMGLLGEYLGRMYSDVRARPRFFIEKVLRSQPAAPAPAVTVDGLTSTHTDQVSP</sequence>
<keyword id="KW-0046">Antibiotic resistance</keyword>
<keyword id="KW-0997">Cell inner membrane</keyword>
<keyword id="KW-1003">Cell membrane</keyword>
<keyword id="KW-0328">Glycosyltransferase</keyword>
<keyword id="KW-0441">Lipid A biosynthesis</keyword>
<keyword id="KW-0444">Lipid biosynthesis</keyword>
<keyword id="KW-0443">Lipid metabolism</keyword>
<keyword id="KW-0448">Lipopolysaccharide biosynthesis</keyword>
<keyword id="KW-0472">Membrane</keyword>
<keyword id="KW-0808">Transferase</keyword>
<keyword id="KW-0812">Transmembrane</keyword>
<keyword id="KW-1133">Transmembrane helix</keyword>
<organism>
    <name type="scientific">Pseudomonas fluorescens (strain ATCC BAA-477 / NRRL B-23932 / Pf-5)</name>
    <dbReference type="NCBI Taxonomy" id="220664"/>
    <lineage>
        <taxon>Bacteria</taxon>
        <taxon>Pseudomonadati</taxon>
        <taxon>Pseudomonadota</taxon>
        <taxon>Gammaproteobacteria</taxon>
        <taxon>Pseudomonadales</taxon>
        <taxon>Pseudomonadaceae</taxon>
        <taxon>Pseudomonas</taxon>
    </lineage>
</organism>
<proteinExistence type="inferred from homology"/>
<comment type="function">
    <text evidence="1">Catalyzes the transfer of 4-deoxy-4-formamido-L-arabinose from UDP to undecaprenyl phosphate. The modified arabinose is attached to lipid A and is required for resistance to polymyxin and cationic antimicrobial peptides.</text>
</comment>
<comment type="catalytic activity">
    <reaction evidence="1">
        <text>UDP-4-deoxy-4-formamido-beta-L-arabinose + di-trans,octa-cis-undecaprenyl phosphate = 4-deoxy-4-formamido-alpha-L-arabinopyranosyl di-trans,octa-cis-undecaprenyl phosphate + UDP</text>
        <dbReference type="Rhea" id="RHEA:27722"/>
        <dbReference type="ChEBI" id="CHEBI:58223"/>
        <dbReference type="ChEBI" id="CHEBI:58709"/>
        <dbReference type="ChEBI" id="CHEBI:58909"/>
        <dbReference type="ChEBI" id="CHEBI:60392"/>
        <dbReference type="EC" id="2.4.2.53"/>
    </reaction>
</comment>
<comment type="pathway">
    <text evidence="1">Glycolipid biosynthesis; 4-amino-4-deoxy-alpha-L-arabinose undecaprenyl phosphate biosynthesis; 4-amino-4-deoxy-alpha-L-arabinose undecaprenyl phosphate from UDP-4-deoxy-4-formamido-beta-L-arabinose and undecaprenyl phosphate: step 1/2.</text>
</comment>
<comment type="pathway">
    <text evidence="1">Bacterial outer membrane biogenesis; lipopolysaccharide biosynthesis.</text>
</comment>
<comment type="subcellular location">
    <subcellularLocation>
        <location evidence="1">Cell inner membrane</location>
        <topology evidence="1">Multi-pass membrane protein</topology>
    </subcellularLocation>
</comment>
<comment type="similarity">
    <text evidence="1">Belongs to the glycosyltransferase 2 family.</text>
</comment>
<gene>
    <name evidence="1" type="primary">arnC</name>
    <name type="ordered locus">PFL_3044</name>
</gene>
<reference key="1">
    <citation type="journal article" date="2005" name="Nat. Biotechnol.">
        <title>Complete genome sequence of the plant commensal Pseudomonas fluorescens Pf-5.</title>
        <authorList>
            <person name="Paulsen I.T."/>
            <person name="Press C.M."/>
            <person name="Ravel J."/>
            <person name="Kobayashi D.Y."/>
            <person name="Myers G.S.A."/>
            <person name="Mavrodi D.V."/>
            <person name="DeBoy R.T."/>
            <person name="Seshadri R."/>
            <person name="Ren Q."/>
            <person name="Madupu R."/>
            <person name="Dodson R.J."/>
            <person name="Durkin A.S."/>
            <person name="Brinkac L.M."/>
            <person name="Daugherty S.C."/>
            <person name="Sullivan S.A."/>
            <person name="Rosovitz M.J."/>
            <person name="Gwinn M.L."/>
            <person name="Zhou L."/>
            <person name="Schneider D.J."/>
            <person name="Cartinhour S.W."/>
            <person name="Nelson W.C."/>
            <person name="Weidman J."/>
            <person name="Watkins K."/>
            <person name="Tran K."/>
            <person name="Khouri H."/>
            <person name="Pierson E.A."/>
            <person name="Pierson L.S. III"/>
            <person name="Thomashow L.S."/>
            <person name="Loper J.E."/>
        </authorList>
    </citation>
    <scope>NUCLEOTIDE SEQUENCE [LARGE SCALE GENOMIC DNA]</scope>
    <source>
        <strain>ATCC BAA-477 / NRRL B-23932 / Pf-5</strain>
    </source>
</reference>
<name>ARNC_PSEF5</name>
<protein>
    <recommendedName>
        <fullName evidence="1">Undecaprenyl-phosphate 4-deoxy-4-formamido-L-arabinose transferase</fullName>
        <ecNumber evidence="1">2.4.2.53</ecNumber>
    </recommendedName>
    <alternativeName>
        <fullName evidence="1">Undecaprenyl-phosphate Ara4FN transferase</fullName>
        <shortName evidence="1">Ara4FN transferase</shortName>
    </alternativeName>
</protein>
<feature type="chain" id="PRO_0000380267" description="Undecaprenyl-phosphate 4-deoxy-4-formamido-L-arabinose transferase">
    <location>
        <begin position="1"/>
        <end position="339"/>
    </location>
</feature>
<feature type="transmembrane region" description="Helical" evidence="1">
    <location>
        <begin position="235"/>
        <end position="255"/>
    </location>
</feature>
<feature type="transmembrane region" description="Helical" evidence="1">
    <location>
        <begin position="270"/>
        <end position="290"/>
    </location>
</feature>
<accession>Q4KC83</accession>
<dbReference type="EC" id="2.4.2.53" evidence="1"/>
<dbReference type="EMBL" id="CP000076">
    <property type="protein sequence ID" value="AAY92314.1"/>
    <property type="molecule type" value="Genomic_DNA"/>
</dbReference>
<dbReference type="RefSeq" id="WP_011061332.1">
    <property type="nucleotide sequence ID" value="NC_004129.6"/>
</dbReference>
<dbReference type="SMR" id="Q4KC83"/>
<dbReference type="STRING" id="220664.PFL_3044"/>
<dbReference type="CAZy" id="GT2">
    <property type="family name" value="Glycosyltransferase Family 2"/>
</dbReference>
<dbReference type="GeneID" id="57476065"/>
<dbReference type="KEGG" id="pfl:PFL_3044"/>
<dbReference type="PATRIC" id="fig|220664.5.peg.3104"/>
<dbReference type="eggNOG" id="COG0463">
    <property type="taxonomic scope" value="Bacteria"/>
</dbReference>
<dbReference type="HOGENOM" id="CLU_033536_0_0_6"/>
<dbReference type="UniPathway" id="UPA00030"/>
<dbReference type="UniPathway" id="UPA00036">
    <property type="reaction ID" value="UER00495"/>
</dbReference>
<dbReference type="Proteomes" id="UP000008540">
    <property type="component" value="Chromosome"/>
</dbReference>
<dbReference type="GO" id="GO:0005886">
    <property type="term" value="C:plasma membrane"/>
    <property type="evidence" value="ECO:0007669"/>
    <property type="project" value="UniProtKB-SubCell"/>
</dbReference>
<dbReference type="GO" id="GO:0016780">
    <property type="term" value="F:phosphotransferase activity, for other substituted phosphate groups"/>
    <property type="evidence" value="ECO:0007669"/>
    <property type="project" value="UniProtKB-UniRule"/>
</dbReference>
<dbReference type="GO" id="GO:0099621">
    <property type="term" value="F:undecaprenyl-phosphate 4-deoxy-4-formamido-L-arabinose transferase activity"/>
    <property type="evidence" value="ECO:0007669"/>
    <property type="project" value="UniProtKB-EC"/>
</dbReference>
<dbReference type="GO" id="GO:0036108">
    <property type="term" value="P:4-amino-4-deoxy-alpha-L-arabinopyranosyl undecaprenyl phosphate biosynthetic process"/>
    <property type="evidence" value="ECO:0007669"/>
    <property type="project" value="UniProtKB-UniRule"/>
</dbReference>
<dbReference type="GO" id="GO:0009245">
    <property type="term" value="P:lipid A biosynthetic process"/>
    <property type="evidence" value="ECO:0007669"/>
    <property type="project" value="UniProtKB-UniRule"/>
</dbReference>
<dbReference type="GO" id="GO:0009103">
    <property type="term" value="P:lipopolysaccharide biosynthetic process"/>
    <property type="evidence" value="ECO:0007669"/>
    <property type="project" value="UniProtKB-UniRule"/>
</dbReference>
<dbReference type="GO" id="GO:0046677">
    <property type="term" value="P:response to antibiotic"/>
    <property type="evidence" value="ECO:0007669"/>
    <property type="project" value="UniProtKB-KW"/>
</dbReference>
<dbReference type="CDD" id="cd04187">
    <property type="entry name" value="DPM1_like_bac"/>
    <property type="match status" value="1"/>
</dbReference>
<dbReference type="Gene3D" id="3.90.550.10">
    <property type="entry name" value="Spore Coat Polysaccharide Biosynthesis Protein SpsA, Chain A"/>
    <property type="match status" value="1"/>
</dbReference>
<dbReference type="HAMAP" id="MF_01164">
    <property type="entry name" value="ArnC_transfer"/>
    <property type="match status" value="1"/>
</dbReference>
<dbReference type="InterPro" id="IPR022857">
    <property type="entry name" value="ArnC_tfrase"/>
</dbReference>
<dbReference type="InterPro" id="IPR001173">
    <property type="entry name" value="Glyco_trans_2-like"/>
</dbReference>
<dbReference type="InterPro" id="IPR050256">
    <property type="entry name" value="Glycosyltransferase_2"/>
</dbReference>
<dbReference type="InterPro" id="IPR029044">
    <property type="entry name" value="Nucleotide-diphossugar_trans"/>
</dbReference>
<dbReference type="NCBIfam" id="NF007986">
    <property type="entry name" value="PRK10714.1"/>
    <property type="match status" value="1"/>
</dbReference>
<dbReference type="PANTHER" id="PTHR48090:SF3">
    <property type="entry name" value="UNDECAPRENYL-PHOSPHATE 4-DEOXY-4-FORMAMIDO-L-ARABINOSE TRANSFERASE"/>
    <property type="match status" value="1"/>
</dbReference>
<dbReference type="PANTHER" id="PTHR48090">
    <property type="entry name" value="UNDECAPRENYL-PHOSPHATE 4-DEOXY-4-FORMAMIDO-L-ARABINOSE TRANSFERASE-RELATED"/>
    <property type="match status" value="1"/>
</dbReference>
<dbReference type="Pfam" id="PF00535">
    <property type="entry name" value="Glycos_transf_2"/>
    <property type="match status" value="1"/>
</dbReference>
<dbReference type="SUPFAM" id="SSF53448">
    <property type="entry name" value="Nucleotide-diphospho-sugar transferases"/>
    <property type="match status" value="1"/>
</dbReference>